<keyword id="KW-0963">Cytoplasm</keyword>
<keyword id="KW-0378">Hydrolase</keyword>
<keyword id="KW-1185">Reference proteome</keyword>
<keyword id="KW-0694">RNA-binding</keyword>
<keyword id="KW-0820">tRNA-binding</keyword>
<evidence type="ECO:0000255" key="1">
    <source>
        <dbReference type="HAMAP-Rule" id="MF_00518"/>
    </source>
</evidence>
<comment type="function">
    <text evidence="1">An aminoacyl-tRNA editing enzyme that deacylates mischarged D-aminoacyl-tRNAs. Also deacylates mischarged glycyl-tRNA(Ala), protecting cells against glycine mischarging by AlaRS. Acts via tRNA-based rather than protein-based catalysis; rejects L-amino acids rather than detecting D-amino acids in the active site. By recycling D-aminoacyl-tRNA to D-amino acids and free tRNA molecules, this enzyme counteracts the toxicity associated with the formation of D-aminoacyl-tRNA entities in vivo and helps enforce protein L-homochirality.</text>
</comment>
<comment type="catalytic activity">
    <reaction evidence="1">
        <text>glycyl-tRNA(Ala) + H2O = tRNA(Ala) + glycine + H(+)</text>
        <dbReference type="Rhea" id="RHEA:53744"/>
        <dbReference type="Rhea" id="RHEA-COMP:9657"/>
        <dbReference type="Rhea" id="RHEA-COMP:13640"/>
        <dbReference type="ChEBI" id="CHEBI:15377"/>
        <dbReference type="ChEBI" id="CHEBI:15378"/>
        <dbReference type="ChEBI" id="CHEBI:57305"/>
        <dbReference type="ChEBI" id="CHEBI:78442"/>
        <dbReference type="ChEBI" id="CHEBI:78522"/>
        <dbReference type="EC" id="3.1.1.96"/>
    </reaction>
</comment>
<comment type="catalytic activity">
    <reaction evidence="1">
        <text>a D-aminoacyl-tRNA + H2O = a tRNA + a D-alpha-amino acid + H(+)</text>
        <dbReference type="Rhea" id="RHEA:13953"/>
        <dbReference type="Rhea" id="RHEA-COMP:10123"/>
        <dbReference type="Rhea" id="RHEA-COMP:10124"/>
        <dbReference type="ChEBI" id="CHEBI:15377"/>
        <dbReference type="ChEBI" id="CHEBI:15378"/>
        <dbReference type="ChEBI" id="CHEBI:59871"/>
        <dbReference type="ChEBI" id="CHEBI:78442"/>
        <dbReference type="ChEBI" id="CHEBI:79333"/>
        <dbReference type="EC" id="3.1.1.96"/>
    </reaction>
</comment>
<comment type="subunit">
    <text evidence="1">Homodimer.</text>
</comment>
<comment type="subcellular location">
    <subcellularLocation>
        <location evidence="1">Cytoplasm</location>
    </subcellularLocation>
</comment>
<comment type="domain">
    <text evidence="1">A Gly-cisPro motif from one monomer fits into the active site of the other monomer to allow specific chiral rejection of L-amino acids.</text>
</comment>
<comment type="similarity">
    <text evidence="1">Belongs to the DTD family.</text>
</comment>
<organism>
    <name type="scientific">Chlorobium phaeobacteroides (strain DSM 266 / SMG 266 / 2430)</name>
    <dbReference type="NCBI Taxonomy" id="290317"/>
    <lineage>
        <taxon>Bacteria</taxon>
        <taxon>Pseudomonadati</taxon>
        <taxon>Chlorobiota</taxon>
        <taxon>Chlorobiia</taxon>
        <taxon>Chlorobiales</taxon>
        <taxon>Chlorobiaceae</taxon>
        <taxon>Chlorobium/Pelodictyon group</taxon>
        <taxon>Chlorobium</taxon>
    </lineage>
</organism>
<feature type="chain" id="PRO_1000050822" description="D-aminoacyl-tRNA deacylase">
    <location>
        <begin position="1"/>
        <end position="150"/>
    </location>
</feature>
<feature type="short sequence motif" description="Gly-cisPro motif, important for rejection of L-amino acids" evidence="1">
    <location>
        <begin position="138"/>
        <end position="139"/>
    </location>
</feature>
<accession>A1BI65</accession>
<protein>
    <recommendedName>
        <fullName evidence="1">D-aminoacyl-tRNA deacylase</fullName>
        <shortName evidence="1">DTD</shortName>
        <ecNumber evidence="1">3.1.1.96</ecNumber>
    </recommendedName>
    <alternativeName>
        <fullName evidence="1">Gly-tRNA(Ala) deacylase</fullName>
    </alternativeName>
</protein>
<name>DTD_CHLPD</name>
<dbReference type="EC" id="3.1.1.96" evidence="1"/>
<dbReference type="EMBL" id="CP000492">
    <property type="protein sequence ID" value="ABL66092.1"/>
    <property type="molecule type" value="Genomic_DNA"/>
</dbReference>
<dbReference type="RefSeq" id="WP_011745894.1">
    <property type="nucleotide sequence ID" value="NC_008639.1"/>
</dbReference>
<dbReference type="SMR" id="A1BI65"/>
<dbReference type="STRING" id="290317.Cpha266_2080"/>
<dbReference type="KEGG" id="cph:Cpha266_2080"/>
<dbReference type="eggNOG" id="COG1490">
    <property type="taxonomic scope" value="Bacteria"/>
</dbReference>
<dbReference type="HOGENOM" id="CLU_076901_1_0_10"/>
<dbReference type="OrthoDB" id="9801395at2"/>
<dbReference type="Proteomes" id="UP000008701">
    <property type="component" value="Chromosome"/>
</dbReference>
<dbReference type="GO" id="GO:0005737">
    <property type="term" value="C:cytoplasm"/>
    <property type="evidence" value="ECO:0007669"/>
    <property type="project" value="UniProtKB-SubCell"/>
</dbReference>
<dbReference type="GO" id="GO:0051500">
    <property type="term" value="F:D-tyrosyl-tRNA(Tyr) deacylase activity"/>
    <property type="evidence" value="ECO:0007669"/>
    <property type="project" value="TreeGrafter"/>
</dbReference>
<dbReference type="GO" id="GO:0106026">
    <property type="term" value="F:Gly-tRNA(Ala) deacylase activity"/>
    <property type="evidence" value="ECO:0007669"/>
    <property type="project" value="UniProtKB-UniRule"/>
</dbReference>
<dbReference type="GO" id="GO:0043908">
    <property type="term" value="F:Ser(Gly)-tRNA(Ala) hydrolase activity"/>
    <property type="evidence" value="ECO:0007669"/>
    <property type="project" value="UniProtKB-UniRule"/>
</dbReference>
<dbReference type="GO" id="GO:0000049">
    <property type="term" value="F:tRNA binding"/>
    <property type="evidence" value="ECO:0007669"/>
    <property type="project" value="UniProtKB-UniRule"/>
</dbReference>
<dbReference type="GO" id="GO:0019478">
    <property type="term" value="P:D-amino acid catabolic process"/>
    <property type="evidence" value="ECO:0007669"/>
    <property type="project" value="UniProtKB-UniRule"/>
</dbReference>
<dbReference type="FunFam" id="3.50.80.10:FF:000001">
    <property type="entry name" value="D-aminoacyl-tRNA deacylase"/>
    <property type="match status" value="1"/>
</dbReference>
<dbReference type="Gene3D" id="3.50.80.10">
    <property type="entry name" value="D-tyrosyl-tRNA(Tyr) deacylase"/>
    <property type="match status" value="1"/>
</dbReference>
<dbReference type="HAMAP" id="MF_00518">
    <property type="entry name" value="Deacylase_Dtd"/>
    <property type="match status" value="1"/>
</dbReference>
<dbReference type="InterPro" id="IPR003732">
    <property type="entry name" value="Daa-tRNA_deacyls_DTD"/>
</dbReference>
<dbReference type="InterPro" id="IPR023509">
    <property type="entry name" value="DTD-like_sf"/>
</dbReference>
<dbReference type="NCBIfam" id="TIGR00256">
    <property type="entry name" value="D-aminoacyl-tRNA deacylase"/>
    <property type="match status" value="1"/>
</dbReference>
<dbReference type="PANTHER" id="PTHR10472:SF5">
    <property type="entry name" value="D-AMINOACYL-TRNA DEACYLASE 1"/>
    <property type="match status" value="1"/>
</dbReference>
<dbReference type="PANTHER" id="PTHR10472">
    <property type="entry name" value="D-TYROSYL-TRNA TYR DEACYLASE"/>
    <property type="match status" value="1"/>
</dbReference>
<dbReference type="Pfam" id="PF02580">
    <property type="entry name" value="Tyr_Deacylase"/>
    <property type="match status" value="1"/>
</dbReference>
<dbReference type="SUPFAM" id="SSF69500">
    <property type="entry name" value="DTD-like"/>
    <property type="match status" value="1"/>
</dbReference>
<proteinExistence type="inferred from homology"/>
<sequence>MRVIVQRVLSASVASGDESAVHIGPGLLVLSGIAPADDQAALGWMCRKVVNLRIFDDEAGRMNRSVKDIGGEILLVSQFTLYSDVSSGNRPGFSGAAGYDIAKPLFEKFHQMVQQEMERPVATGWYGEHMQVALVNDGPVTLIIDSPTRS</sequence>
<reference key="1">
    <citation type="submission" date="2006-12" db="EMBL/GenBank/DDBJ databases">
        <title>Complete sequence of Chlorobium phaeobacteroides DSM 266.</title>
        <authorList>
            <consortium name="US DOE Joint Genome Institute"/>
            <person name="Copeland A."/>
            <person name="Lucas S."/>
            <person name="Lapidus A."/>
            <person name="Barry K."/>
            <person name="Detter J.C."/>
            <person name="Glavina del Rio T."/>
            <person name="Hammon N."/>
            <person name="Israni S."/>
            <person name="Pitluck S."/>
            <person name="Goltsman E."/>
            <person name="Schmutz J."/>
            <person name="Larimer F."/>
            <person name="Land M."/>
            <person name="Hauser L."/>
            <person name="Mikhailova N."/>
            <person name="Li T."/>
            <person name="Overmann J."/>
            <person name="Bryant D.A."/>
            <person name="Richardson P."/>
        </authorList>
    </citation>
    <scope>NUCLEOTIDE SEQUENCE [LARGE SCALE GENOMIC DNA]</scope>
    <source>
        <strain>DSM 266 / SMG 266 / 2430</strain>
    </source>
</reference>
<gene>
    <name evidence="1" type="primary">dtd</name>
    <name type="ordered locus">Cpha266_2080</name>
</gene>